<protein>
    <recommendedName>
        <fullName evidence="1">Glucose-6-phosphate isomerase</fullName>
        <shortName evidence="1">GPI</shortName>
        <ecNumber evidence="1">5.3.1.9</ecNumber>
    </recommendedName>
    <alternativeName>
        <fullName evidence="1">Phosphoglucose isomerase</fullName>
        <shortName evidence="1">PGI</shortName>
    </alternativeName>
    <alternativeName>
        <fullName evidence="1">Phosphohexose isomerase</fullName>
        <shortName evidence="1">PHI</shortName>
    </alternativeName>
</protein>
<feature type="chain" id="PRO_1000125740" description="Glucose-6-phosphate isomerase">
    <location>
        <begin position="1"/>
        <end position="545"/>
    </location>
</feature>
<feature type="active site" description="Proton donor" evidence="1">
    <location>
        <position position="343"/>
    </location>
</feature>
<feature type="active site" evidence="1">
    <location>
        <position position="374"/>
    </location>
</feature>
<feature type="active site" evidence="1">
    <location>
        <position position="513"/>
    </location>
</feature>
<gene>
    <name evidence="1" type="primary">pgi</name>
    <name type="ordered locus">Mpe_A3094</name>
</gene>
<sequence length="545" mass="58752">MSASWVRGDRTAAWADLSAHFAASAANFDLRTAFAGDARRFERFGVEAPHLFADLSKNWLDAPALALLLRLAREVGLEGRRDAMLAGAPLNNTEGRAVLHTALRAPRDAAPHGSEVHATLDAMLAFAERVRDTAHSGITDVVNIGIGGSDLGPQMAVPALQAYTQAGLRSHFVSNLDGHELAPLLTQLDPQSTLFIIASKTFTTQETMANAETAKAWFLARGGRDIARHFVATTTNVDAAVAFGIDTAFGFWDWVGGRYSLWSAIGLPVAIALGATHFRALLGGAHAMDRHFATAPLERNLPVLLGLLDVWYRNFHGLTSRSVAPYHQGLRRLPAYLQQLEMESNGKCVDRDGEPLPFATSPVVWGEPGTNAQHAYFQMLHQGSDVIPVEFIAVRDTSHAHLDLPPALQPLLAEQQRKLLANCLAQSQALMAGKSEAQALAERAPTAAADMPRDVLARHRSFPGNRPSTTLLLERLDPATLGALIAMYEHRVFTSGAVWGINSFDQWGVELGKAMCSELLPRLTTGDASGLDGSTVGLLRKLGTP</sequence>
<organism>
    <name type="scientific">Methylibium petroleiphilum (strain ATCC BAA-1232 / LMG 22953 / PM1)</name>
    <dbReference type="NCBI Taxonomy" id="420662"/>
    <lineage>
        <taxon>Bacteria</taxon>
        <taxon>Pseudomonadati</taxon>
        <taxon>Pseudomonadota</taxon>
        <taxon>Betaproteobacteria</taxon>
        <taxon>Burkholderiales</taxon>
        <taxon>Sphaerotilaceae</taxon>
        <taxon>Methylibium</taxon>
    </lineage>
</organism>
<comment type="function">
    <text evidence="1">Catalyzes the reversible isomerization of glucose-6-phosphate to fructose-6-phosphate.</text>
</comment>
<comment type="catalytic activity">
    <reaction evidence="1">
        <text>alpha-D-glucose 6-phosphate = beta-D-fructose 6-phosphate</text>
        <dbReference type="Rhea" id="RHEA:11816"/>
        <dbReference type="ChEBI" id="CHEBI:57634"/>
        <dbReference type="ChEBI" id="CHEBI:58225"/>
        <dbReference type="EC" id="5.3.1.9"/>
    </reaction>
</comment>
<comment type="pathway">
    <text evidence="1">Carbohydrate biosynthesis; gluconeogenesis.</text>
</comment>
<comment type="pathway">
    <text evidence="1">Carbohydrate degradation; glycolysis; D-glyceraldehyde 3-phosphate and glycerone phosphate from D-glucose: step 2/4.</text>
</comment>
<comment type="subcellular location">
    <subcellularLocation>
        <location evidence="1">Cytoplasm</location>
    </subcellularLocation>
</comment>
<comment type="similarity">
    <text evidence="1">Belongs to the GPI family.</text>
</comment>
<dbReference type="EC" id="5.3.1.9" evidence="1"/>
<dbReference type="EMBL" id="CP000555">
    <property type="protein sequence ID" value="ABM96047.1"/>
    <property type="molecule type" value="Genomic_DNA"/>
</dbReference>
<dbReference type="RefSeq" id="WP_011830670.1">
    <property type="nucleotide sequence ID" value="NC_008825.1"/>
</dbReference>
<dbReference type="SMR" id="A2SKF8"/>
<dbReference type="STRING" id="420662.Mpe_A3094"/>
<dbReference type="KEGG" id="mpt:Mpe_A3094"/>
<dbReference type="eggNOG" id="COG0166">
    <property type="taxonomic scope" value="Bacteria"/>
</dbReference>
<dbReference type="HOGENOM" id="CLU_017947_3_1_4"/>
<dbReference type="UniPathway" id="UPA00109">
    <property type="reaction ID" value="UER00181"/>
</dbReference>
<dbReference type="UniPathway" id="UPA00138"/>
<dbReference type="Proteomes" id="UP000000366">
    <property type="component" value="Chromosome"/>
</dbReference>
<dbReference type="GO" id="GO:0005829">
    <property type="term" value="C:cytosol"/>
    <property type="evidence" value="ECO:0007669"/>
    <property type="project" value="TreeGrafter"/>
</dbReference>
<dbReference type="GO" id="GO:0097367">
    <property type="term" value="F:carbohydrate derivative binding"/>
    <property type="evidence" value="ECO:0007669"/>
    <property type="project" value="InterPro"/>
</dbReference>
<dbReference type="GO" id="GO:0004347">
    <property type="term" value="F:glucose-6-phosphate isomerase activity"/>
    <property type="evidence" value="ECO:0007669"/>
    <property type="project" value="UniProtKB-UniRule"/>
</dbReference>
<dbReference type="GO" id="GO:0048029">
    <property type="term" value="F:monosaccharide binding"/>
    <property type="evidence" value="ECO:0007669"/>
    <property type="project" value="TreeGrafter"/>
</dbReference>
<dbReference type="GO" id="GO:0006094">
    <property type="term" value="P:gluconeogenesis"/>
    <property type="evidence" value="ECO:0007669"/>
    <property type="project" value="UniProtKB-UniRule"/>
</dbReference>
<dbReference type="GO" id="GO:0051156">
    <property type="term" value="P:glucose 6-phosphate metabolic process"/>
    <property type="evidence" value="ECO:0007669"/>
    <property type="project" value="TreeGrafter"/>
</dbReference>
<dbReference type="GO" id="GO:0006096">
    <property type="term" value="P:glycolytic process"/>
    <property type="evidence" value="ECO:0007669"/>
    <property type="project" value="UniProtKB-UniRule"/>
</dbReference>
<dbReference type="CDD" id="cd05015">
    <property type="entry name" value="SIS_PGI_1"/>
    <property type="match status" value="1"/>
</dbReference>
<dbReference type="CDD" id="cd05016">
    <property type="entry name" value="SIS_PGI_2"/>
    <property type="match status" value="1"/>
</dbReference>
<dbReference type="Gene3D" id="1.10.1390.10">
    <property type="match status" value="1"/>
</dbReference>
<dbReference type="Gene3D" id="3.40.50.10490">
    <property type="entry name" value="Glucose-6-phosphate isomerase like protein, domain 1"/>
    <property type="match status" value="2"/>
</dbReference>
<dbReference type="HAMAP" id="MF_00473">
    <property type="entry name" value="G6P_isomerase"/>
    <property type="match status" value="1"/>
</dbReference>
<dbReference type="InterPro" id="IPR001672">
    <property type="entry name" value="G6P_Isomerase"/>
</dbReference>
<dbReference type="InterPro" id="IPR023096">
    <property type="entry name" value="G6P_Isomerase_C"/>
</dbReference>
<dbReference type="InterPro" id="IPR018189">
    <property type="entry name" value="Phosphoglucose_isomerase_CS"/>
</dbReference>
<dbReference type="InterPro" id="IPR046348">
    <property type="entry name" value="SIS_dom_sf"/>
</dbReference>
<dbReference type="InterPro" id="IPR035476">
    <property type="entry name" value="SIS_PGI_1"/>
</dbReference>
<dbReference type="InterPro" id="IPR035482">
    <property type="entry name" value="SIS_PGI_2"/>
</dbReference>
<dbReference type="NCBIfam" id="NF001211">
    <property type="entry name" value="PRK00179.1"/>
    <property type="match status" value="1"/>
</dbReference>
<dbReference type="PANTHER" id="PTHR11469">
    <property type="entry name" value="GLUCOSE-6-PHOSPHATE ISOMERASE"/>
    <property type="match status" value="1"/>
</dbReference>
<dbReference type="PANTHER" id="PTHR11469:SF1">
    <property type="entry name" value="GLUCOSE-6-PHOSPHATE ISOMERASE"/>
    <property type="match status" value="1"/>
</dbReference>
<dbReference type="Pfam" id="PF00342">
    <property type="entry name" value="PGI"/>
    <property type="match status" value="1"/>
</dbReference>
<dbReference type="PRINTS" id="PR00662">
    <property type="entry name" value="G6PISOMERASE"/>
</dbReference>
<dbReference type="SUPFAM" id="SSF53697">
    <property type="entry name" value="SIS domain"/>
    <property type="match status" value="1"/>
</dbReference>
<dbReference type="PROSITE" id="PS00765">
    <property type="entry name" value="P_GLUCOSE_ISOMERASE_1"/>
    <property type="match status" value="1"/>
</dbReference>
<dbReference type="PROSITE" id="PS00174">
    <property type="entry name" value="P_GLUCOSE_ISOMERASE_2"/>
    <property type="match status" value="1"/>
</dbReference>
<dbReference type="PROSITE" id="PS51463">
    <property type="entry name" value="P_GLUCOSE_ISOMERASE_3"/>
    <property type="match status" value="1"/>
</dbReference>
<proteinExistence type="inferred from homology"/>
<keyword id="KW-0963">Cytoplasm</keyword>
<keyword id="KW-0312">Gluconeogenesis</keyword>
<keyword id="KW-0324">Glycolysis</keyword>
<keyword id="KW-0413">Isomerase</keyword>
<keyword id="KW-1185">Reference proteome</keyword>
<evidence type="ECO:0000255" key="1">
    <source>
        <dbReference type="HAMAP-Rule" id="MF_00473"/>
    </source>
</evidence>
<accession>A2SKF8</accession>
<reference key="1">
    <citation type="journal article" date="2007" name="J. Bacteriol.">
        <title>Whole-genome analysis of the methyl tert-butyl ether-degrading beta-proteobacterium Methylibium petroleiphilum PM1.</title>
        <authorList>
            <person name="Kane S.R."/>
            <person name="Chakicherla A.Y."/>
            <person name="Chain P.S.G."/>
            <person name="Schmidt R."/>
            <person name="Shin M.W."/>
            <person name="Legler T.C."/>
            <person name="Scow K.M."/>
            <person name="Larimer F.W."/>
            <person name="Lucas S.M."/>
            <person name="Richardson P.M."/>
            <person name="Hristova K.R."/>
        </authorList>
    </citation>
    <scope>NUCLEOTIDE SEQUENCE [LARGE SCALE GENOMIC DNA]</scope>
    <source>
        <strain>ATCC BAA-1232 / LMG 22953 / PM1</strain>
    </source>
</reference>
<name>G6PI_METPP</name>